<sequence length="169" mass="18879">MIKPQLSKKIDSVAVLQEKISTAKTVIVFEYASLPVSSFMQLRRELKKTSCEVKVYPKNIMQRAVTNAKQDDLVTFLKGAKALIISPQELLEPIKTIYNFAKKNKAVKIVSGIVEQKIVSLQEIKTLATLPSKEQMLALLAASMFAPLQHLAIGLNMLVQTKKQENPQQ</sequence>
<reference key="1">
    <citation type="journal article" date="2004" name="Nat. Genet.">
        <title>Reductive evolution suggested from the complete genome sequence of a plant-pathogenic phytoplasma.</title>
        <authorList>
            <person name="Oshima K."/>
            <person name="Kakizawa S."/>
            <person name="Nishigawa H."/>
            <person name="Jung H.-Y."/>
            <person name="Wei W."/>
            <person name="Suzuki S."/>
            <person name="Arashida R."/>
            <person name="Nakata D."/>
            <person name="Miyata S."/>
            <person name="Ugaki M."/>
            <person name="Namba S."/>
        </authorList>
    </citation>
    <scope>NUCLEOTIDE SEQUENCE [LARGE SCALE GENOMIC DNA]</scope>
    <source>
        <strain>OY-M</strain>
    </source>
</reference>
<evidence type="ECO:0000255" key="1">
    <source>
        <dbReference type="HAMAP-Rule" id="MF_00362"/>
    </source>
</evidence>
<evidence type="ECO:0000305" key="2"/>
<feature type="chain" id="PRO_0000154680" description="Large ribosomal subunit protein uL10">
    <location>
        <begin position="1"/>
        <end position="169"/>
    </location>
</feature>
<protein>
    <recommendedName>
        <fullName evidence="1">Large ribosomal subunit protein uL10</fullName>
    </recommendedName>
    <alternativeName>
        <fullName evidence="2">50S ribosomal protein L10</fullName>
    </alternativeName>
</protein>
<keyword id="KW-0687">Ribonucleoprotein</keyword>
<keyword id="KW-0689">Ribosomal protein</keyword>
<keyword id="KW-0694">RNA-binding</keyword>
<keyword id="KW-0699">rRNA-binding</keyword>
<accession>Q6YQW5</accession>
<organism>
    <name type="scientific">Onion yellows phytoplasma (strain OY-M)</name>
    <dbReference type="NCBI Taxonomy" id="262768"/>
    <lineage>
        <taxon>Bacteria</taxon>
        <taxon>Bacillati</taxon>
        <taxon>Mycoplasmatota</taxon>
        <taxon>Mollicutes</taxon>
        <taxon>Acholeplasmatales</taxon>
        <taxon>Acholeplasmataceae</taxon>
        <taxon>Candidatus Phytoplasma</taxon>
        <taxon>16SrI (Aster yellows group)</taxon>
    </lineage>
</organism>
<dbReference type="EMBL" id="AP006628">
    <property type="protein sequence ID" value="BAD04343.1"/>
    <property type="molecule type" value="Genomic_DNA"/>
</dbReference>
<dbReference type="SMR" id="Q6YQW5"/>
<dbReference type="STRING" id="262768.PAM_258"/>
<dbReference type="KEGG" id="poy:PAM_258"/>
<dbReference type="eggNOG" id="COG0244">
    <property type="taxonomic scope" value="Bacteria"/>
</dbReference>
<dbReference type="HOGENOM" id="CLU_092227_2_0_14"/>
<dbReference type="BioCyc" id="OYEL262768:G1G26-315-MONOMER"/>
<dbReference type="Proteomes" id="UP000002523">
    <property type="component" value="Chromosome"/>
</dbReference>
<dbReference type="GO" id="GO:1990904">
    <property type="term" value="C:ribonucleoprotein complex"/>
    <property type="evidence" value="ECO:0007669"/>
    <property type="project" value="UniProtKB-KW"/>
</dbReference>
<dbReference type="GO" id="GO:0005840">
    <property type="term" value="C:ribosome"/>
    <property type="evidence" value="ECO:0007669"/>
    <property type="project" value="UniProtKB-KW"/>
</dbReference>
<dbReference type="GO" id="GO:0070180">
    <property type="term" value="F:large ribosomal subunit rRNA binding"/>
    <property type="evidence" value="ECO:0007669"/>
    <property type="project" value="UniProtKB-UniRule"/>
</dbReference>
<dbReference type="GO" id="GO:0006412">
    <property type="term" value="P:translation"/>
    <property type="evidence" value="ECO:0007669"/>
    <property type="project" value="UniProtKB-UniRule"/>
</dbReference>
<dbReference type="CDD" id="cd05797">
    <property type="entry name" value="Ribosomal_L10"/>
    <property type="match status" value="1"/>
</dbReference>
<dbReference type="Gene3D" id="3.30.70.1730">
    <property type="match status" value="1"/>
</dbReference>
<dbReference type="HAMAP" id="MF_00362">
    <property type="entry name" value="Ribosomal_uL10"/>
    <property type="match status" value="1"/>
</dbReference>
<dbReference type="InterPro" id="IPR001790">
    <property type="entry name" value="Ribosomal_uL10"/>
</dbReference>
<dbReference type="InterPro" id="IPR043141">
    <property type="entry name" value="Ribosomal_uL10-like_sf"/>
</dbReference>
<dbReference type="InterPro" id="IPR022973">
    <property type="entry name" value="Ribosomal_uL10_bac"/>
</dbReference>
<dbReference type="InterPro" id="IPR047865">
    <property type="entry name" value="Ribosomal_uL10_bac_type"/>
</dbReference>
<dbReference type="NCBIfam" id="NF000955">
    <property type="entry name" value="PRK00099.1-1"/>
    <property type="match status" value="1"/>
</dbReference>
<dbReference type="PANTHER" id="PTHR11560">
    <property type="entry name" value="39S RIBOSOMAL PROTEIN L10, MITOCHONDRIAL"/>
    <property type="match status" value="1"/>
</dbReference>
<dbReference type="Pfam" id="PF00466">
    <property type="entry name" value="Ribosomal_L10"/>
    <property type="match status" value="1"/>
</dbReference>
<dbReference type="SUPFAM" id="SSF160369">
    <property type="entry name" value="Ribosomal protein L10-like"/>
    <property type="match status" value="1"/>
</dbReference>
<comment type="function">
    <text evidence="1">Forms part of the ribosomal stalk, playing a central role in the interaction of the ribosome with GTP-bound translation factors.</text>
</comment>
<comment type="subunit">
    <text evidence="1">Part of the ribosomal stalk of the 50S ribosomal subunit. The N-terminus interacts with L11 and the large rRNA to form the base of the stalk. The C-terminus forms an elongated spine to which L12 dimers bind in a sequential fashion forming a multimeric L10(L12)X complex.</text>
</comment>
<comment type="similarity">
    <text evidence="1">Belongs to the universal ribosomal protein uL10 family.</text>
</comment>
<gene>
    <name evidence="1" type="primary">rplJ</name>
    <name type="ordered locus">PAM_258</name>
</gene>
<proteinExistence type="inferred from homology"/>
<name>RL10_ONYPE</name>